<accession>B6ISU8</accession>
<gene>
    <name evidence="1" type="primary">frr</name>
    <name type="ordered locus">RC1_1205</name>
</gene>
<evidence type="ECO:0000255" key="1">
    <source>
        <dbReference type="HAMAP-Rule" id="MF_00040"/>
    </source>
</evidence>
<organism>
    <name type="scientific">Rhodospirillum centenum (strain ATCC 51521 / SW)</name>
    <dbReference type="NCBI Taxonomy" id="414684"/>
    <lineage>
        <taxon>Bacteria</taxon>
        <taxon>Pseudomonadati</taxon>
        <taxon>Pseudomonadota</taxon>
        <taxon>Alphaproteobacteria</taxon>
        <taxon>Rhodospirillales</taxon>
        <taxon>Rhodospirillaceae</taxon>
        <taxon>Rhodospirillum</taxon>
    </lineage>
</organism>
<comment type="function">
    <text evidence="1">Responsible for the release of ribosomes from messenger RNA at the termination of protein biosynthesis. May increase the efficiency of translation by recycling ribosomes from one round of translation to another.</text>
</comment>
<comment type="subcellular location">
    <subcellularLocation>
        <location evidence="1">Cytoplasm</location>
    </subcellularLocation>
</comment>
<comment type="similarity">
    <text evidence="1">Belongs to the RRF family.</text>
</comment>
<dbReference type="EMBL" id="CP000613">
    <property type="protein sequence ID" value="ACI98619.1"/>
    <property type="molecule type" value="Genomic_DNA"/>
</dbReference>
<dbReference type="RefSeq" id="WP_012566407.1">
    <property type="nucleotide sequence ID" value="NC_011420.2"/>
</dbReference>
<dbReference type="SMR" id="B6ISU8"/>
<dbReference type="STRING" id="414684.RC1_1205"/>
<dbReference type="KEGG" id="rce:RC1_1205"/>
<dbReference type="eggNOG" id="COG0233">
    <property type="taxonomic scope" value="Bacteria"/>
</dbReference>
<dbReference type="HOGENOM" id="CLU_073981_2_0_5"/>
<dbReference type="OrthoDB" id="9804006at2"/>
<dbReference type="Proteomes" id="UP000001591">
    <property type="component" value="Chromosome"/>
</dbReference>
<dbReference type="GO" id="GO:0005829">
    <property type="term" value="C:cytosol"/>
    <property type="evidence" value="ECO:0007669"/>
    <property type="project" value="GOC"/>
</dbReference>
<dbReference type="GO" id="GO:0043023">
    <property type="term" value="F:ribosomal large subunit binding"/>
    <property type="evidence" value="ECO:0007669"/>
    <property type="project" value="TreeGrafter"/>
</dbReference>
<dbReference type="GO" id="GO:0002184">
    <property type="term" value="P:cytoplasmic translational termination"/>
    <property type="evidence" value="ECO:0007669"/>
    <property type="project" value="TreeGrafter"/>
</dbReference>
<dbReference type="CDD" id="cd00520">
    <property type="entry name" value="RRF"/>
    <property type="match status" value="1"/>
</dbReference>
<dbReference type="FunFam" id="1.10.132.20:FF:000001">
    <property type="entry name" value="Ribosome-recycling factor"/>
    <property type="match status" value="1"/>
</dbReference>
<dbReference type="FunFam" id="3.30.1360.40:FF:000001">
    <property type="entry name" value="Ribosome-recycling factor"/>
    <property type="match status" value="1"/>
</dbReference>
<dbReference type="Gene3D" id="3.30.1360.40">
    <property type="match status" value="1"/>
</dbReference>
<dbReference type="Gene3D" id="1.10.132.20">
    <property type="entry name" value="Ribosome-recycling factor"/>
    <property type="match status" value="1"/>
</dbReference>
<dbReference type="HAMAP" id="MF_00040">
    <property type="entry name" value="RRF"/>
    <property type="match status" value="1"/>
</dbReference>
<dbReference type="InterPro" id="IPR002661">
    <property type="entry name" value="Ribosome_recyc_fac"/>
</dbReference>
<dbReference type="InterPro" id="IPR023584">
    <property type="entry name" value="Ribosome_recyc_fac_dom"/>
</dbReference>
<dbReference type="InterPro" id="IPR036191">
    <property type="entry name" value="RRF_sf"/>
</dbReference>
<dbReference type="NCBIfam" id="TIGR00496">
    <property type="entry name" value="frr"/>
    <property type="match status" value="1"/>
</dbReference>
<dbReference type="PANTHER" id="PTHR20982:SF3">
    <property type="entry name" value="MITOCHONDRIAL RIBOSOME RECYCLING FACTOR PSEUDO 1"/>
    <property type="match status" value="1"/>
</dbReference>
<dbReference type="PANTHER" id="PTHR20982">
    <property type="entry name" value="RIBOSOME RECYCLING FACTOR"/>
    <property type="match status" value="1"/>
</dbReference>
<dbReference type="Pfam" id="PF01765">
    <property type="entry name" value="RRF"/>
    <property type="match status" value="1"/>
</dbReference>
<dbReference type="SUPFAM" id="SSF55194">
    <property type="entry name" value="Ribosome recycling factor, RRF"/>
    <property type="match status" value="1"/>
</dbReference>
<protein>
    <recommendedName>
        <fullName evidence="1">Ribosome-recycling factor</fullName>
        <shortName evidence="1">RRF</shortName>
    </recommendedName>
    <alternativeName>
        <fullName evidence="1">Ribosome-releasing factor</fullName>
    </alternativeName>
</protein>
<feature type="chain" id="PRO_1000090776" description="Ribosome-recycling factor">
    <location>
        <begin position="1"/>
        <end position="185"/>
    </location>
</feature>
<proteinExistence type="inferred from homology"/>
<reference key="1">
    <citation type="submission" date="2007-03" db="EMBL/GenBank/DDBJ databases">
        <title>Genome sequence of Rhodospirillum centenum.</title>
        <authorList>
            <person name="Touchman J.W."/>
            <person name="Bauer C."/>
            <person name="Blankenship R.E."/>
        </authorList>
    </citation>
    <scope>NUCLEOTIDE SEQUENCE [LARGE SCALE GENOMIC DNA]</scope>
    <source>
        <strain>ATCC 51521 / SW</strain>
    </source>
</reference>
<keyword id="KW-0963">Cytoplasm</keyword>
<keyword id="KW-0648">Protein biosynthesis</keyword>
<keyword id="KW-1185">Reference proteome</keyword>
<sequence length="185" mass="20625">MAEPDIKSFERRMDGAVETLRKEFGGLRTGRASTTLLDPVYVDAYGSSSPLNQVATVGVPEPRLITVQVWDRSLVKAVEKAIREAGLGLNPQSDGQTLRVPIPELNQERRQELAKVAAKYAEQARVAVRNVRRDGMDMLKKLLKDGDISEDEQKTWADKVQALTDAHIKKIDEALATKEKEIMQV</sequence>
<name>RRF_RHOCS</name>